<organism>
    <name type="scientific">Streptococcus suis (strain 05ZYH33)</name>
    <dbReference type="NCBI Taxonomy" id="391295"/>
    <lineage>
        <taxon>Bacteria</taxon>
        <taxon>Bacillati</taxon>
        <taxon>Bacillota</taxon>
        <taxon>Bacilli</taxon>
        <taxon>Lactobacillales</taxon>
        <taxon>Streptococcaceae</taxon>
        <taxon>Streptococcus</taxon>
    </lineage>
</organism>
<keyword id="KW-0963">Cytoplasm</keyword>
<keyword id="KW-0312">Gluconeogenesis</keyword>
<keyword id="KW-0324">Glycolysis</keyword>
<keyword id="KW-0413">Isomerase</keyword>
<gene>
    <name evidence="1" type="primary">tpiA</name>
    <name type="ordered locus">SSU05_0531</name>
</gene>
<accession>A4VTQ8</accession>
<proteinExistence type="inferred from homology"/>
<name>TPIS_STRSY</name>
<protein>
    <recommendedName>
        <fullName evidence="1">Triosephosphate isomerase</fullName>
        <shortName evidence="1">TIM</shortName>
        <shortName evidence="1">TPI</shortName>
        <ecNumber evidence="1">5.3.1.1</ecNumber>
    </recommendedName>
    <alternativeName>
        <fullName evidence="1">Triose-phosphate isomerase</fullName>
    </alternativeName>
</protein>
<sequence>MSRKPIIAGNWKMNKNPQEAQAFVEAIAGKLPAGDKIEAAIAAPAVDLNALLWFAKDSELKVAAQNCYFEDAGAFTGETSPKVLAEMGVNYVVIGHSERRDYFHETDEDINKKAHAIFRNGLTPIICCGESLETYEAGKAVEFVGAQVSAALKDLTADQVASLVIAYEPIWAIGTGKSATKDDAQNMCKAVRDVVAADFGQEVADKVRVQYGGSVNPSNVAEYMACPDVDGALVGGASLEAESFLALLNF</sequence>
<comment type="function">
    <text evidence="1">Involved in the gluconeogenesis. Catalyzes stereospecifically the conversion of dihydroxyacetone phosphate (DHAP) to D-glyceraldehyde-3-phosphate (G3P).</text>
</comment>
<comment type="catalytic activity">
    <reaction evidence="1">
        <text>D-glyceraldehyde 3-phosphate = dihydroxyacetone phosphate</text>
        <dbReference type="Rhea" id="RHEA:18585"/>
        <dbReference type="ChEBI" id="CHEBI:57642"/>
        <dbReference type="ChEBI" id="CHEBI:59776"/>
        <dbReference type="EC" id="5.3.1.1"/>
    </reaction>
</comment>
<comment type="pathway">
    <text evidence="1">Carbohydrate biosynthesis; gluconeogenesis.</text>
</comment>
<comment type="pathway">
    <text evidence="1">Carbohydrate degradation; glycolysis; D-glyceraldehyde 3-phosphate from glycerone phosphate: step 1/1.</text>
</comment>
<comment type="subunit">
    <text evidence="1">Homodimer.</text>
</comment>
<comment type="subcellular location">
    <subcellularLocation>
        <location evidence="1">Cytoplasm</location>
    </subcellularLocation>
</comment>
<comment type="similarity">
    <text evidence="1">Belongs to the triosephosphate isomerase family.</text>
</comment>
<evidence type="ECO:0000255" key="1">
    <source>
        <dbReference type="HAMAP-Rule" id="MF_00147"/>
    </source>
</evidence>
<dbReference type="EC" id="5.3.1.1" evidence="1"/>
<dbReference type="EMBL" id="CP000407">
    <property type="protein sequence ID" value="ABP89497.1"/>
    <property type="molecule type" value="Genomic_DNA"/>
</dbReference>
<dbReference type="SMR" id="A4VTQ8"/>
<dbReference type="STRING" id="391295.SSU05_0531"/>
<dbReference type="KEGG" id="ssu:SSU05_0531"/>
<dbReference type="eggNOG" id="COG0149">
    <property type="taxonomic scope" value="Bacteria"/>
</dbReference>
<dbReference type="HOGENOM" id="CLU_024251_2_3_9"/>
<dbReference type="UniPathway" id="UPA00109">
    <property type="reaction ID" value="UER00189"/>
</dbReference>
<dbReference type="UniPathway" id="UPA00138"/>
<dbReference type="GO" id="GO:0005829">
    <property type="term" value="C:cytosol"/>
    <property type="evidence" value="ECO:0007669"/>
    <property type="project" value="TreeGrafter"/>
</dbReference>
<dbReference type="GO" id="GO:0004807">
    <property type="term" value="F:triose-phosphate isomerase activity"/>
    <property type="evidence" value="ECO:0007669"/>
    <property type="project" value="UniProtKB-UniRule"/>
</dbReference>
<dbReference type="GO" id="GO:0006094">
    <property type="term" value="P:gluconeogenesis"/>
    <property type="evidence" value="ECO:0007669"/>
    <property type="project" value="UniProtKB-UniRule"/>
</dbReference>
<dbReference type="GO" id="GO:0046166">
    <property type="term" value="P:glyceraldehyde-3-phosphate biosynthetic process"/>
    <property type="evidence" value="ECO:0007669"/>
    <property type="project" value="TreeGrafter"/>
</dbReference>
<dbReference type="GO" id="GO:0019563">
    <property type="term" value="P:glycerol catabolic process"/>
    <property type="evidence" value="ECO:0007669"/>
    <property type="project" value="TreeGrafter"/>
</dbReference>
<dbReference type="GO" id="GO:0006096">
    <property type="term" value="P:glycolytic process"/>
    <property type="evidence" value="ECO:0007669"/>
    <property type="project" value="UniProtKB-UniRule"/>
</dbReference>
<dbReference type="CDD" id="cd00311">
    <property type="entry name" value="TIM"/>
    <property type="match status" value="1"/>
</dbReference>
<dbReference type="FunFam" id="3.20.20.70:FF:000016">
    <property type="entry name" value="Triosephosphate isomerase"/>
    <property type="match status" value="1"/>
</dbReference>
<dbReference type="Gene3D" id="3.20.20.70">
    <property type="entry name" value="Aldolase class I"/>
    <property type="match status" value="1"/>
</dbReference>
<dbReference type="HAMAP" id="MF_00147_B">
    <property type="entry name" value="TIM_B"/>
    <property type="match status" value="1"/>
</dbReference>
<dbReference type="InterPro" id="IPR013785">
    <property type="entry name" value="Aldolase_TIM"/>
</dbReference>
<dbReference type="InterPro" id="IPR035990">
    <property type="entry name" value="TIM_sf"/>
</dbReference>
<dbReference type="InterPro" id="IPR022896">
    <property type="entry name" value="TrioseP_Isoase_bac/euk"/>
</dbReference>
<dbReference type="InterPro" id="IPR000652">
    <property type="entry name" value="Triosephosphate_isomerase"/>
</dbReference>
<dbReference type="InterPro" id="IPR020861">
    <property type="entry name" value="Triosephosphate_isomerase_AS"/>
</dbReference>
<dbReference type="NCBIfam" id="TIGR00419">
    <property type="entry name" value="tim"/>
    <property type="match status" value="1"/>
</dbReference>
<dbReference type="PANTHER" id="PTHR21139">
    <property type="entry name" value="TRIOSEPHOSPHATE ISOMERASE"/>
    <property type="match status" value="1"/>
</dbReference>
<dbReference type="PANTHER" id="PTHR21139:SF42">
    <property type="entry name" value="TRIOSEPHOSPHATE ISOMERASE"/>
    <property type="match status" value="1"/>
</dbReference>
<dbReference type="Pfam" id="PF00121">
    <property type="entry name" value="TIM"/>
    <property type="match status" value="1"/>
</dbReference>
<dbReference type="SUPFAM" id="SSF51351">
    <property type="entry name" value="Triosephosphate isomerase (TIM)"/>
    <property type="match status" value="1"/>
</dbReference>
<dbReference type="PROSITE" id="PS00171">
    <property type="entry name" value="TIM_1"/>
    <property type="match status" value="1"/>
</dbReference>
<dbReference type="PROSITE" id="PS51440">
    <property type="entry name" value="TIM_2"/>
    <property type="match status" value="1"/>
</dbReference>
<reference key="1">
    <citation type="journal article" date="2007" name="PLoS ONE">
        <title>A glimpse of streptococcal toxic shock syndrome from comparative genomics of S. suis 2 Chinese isolates.</title>
        <authorList>
            <person name="Chen C."/>
            <person name="Tang J."/>
            <person name="Dong W."/>
            <person name="Wang C."/>
            <person name="Feng Y."/>
            <person name="Wang J."/>
            <person name="Zheng F."/>
            <person name="Pan X."/>
            <person name="Liu D."/>
            <person name="Li M."/>
            <person name="Song Y."/>
            <person name="Zhu X."/>
            <person name="Sun H."/>
            <person name="Feng T."/>
            <person name="Guo Z."/>
            <person name="Ju A."/>
            <person name="Ge J."/>
            <person name="Dong Y."/>
            <person name="Sun W."/>
            <person name="Jiang Y."/>
            <person name="Wang J."/>
            <person name="Yan J."/>
            <person name="Yang H."/>
            <person name="Wang X."/>
            <person name="Gao G.F."/>
            <person name="Yang R."/>
            <person name="Wang J."/>
            <person name="Yu J."/>
        </authorList>
    </citation>
    <scope>NUCLEOTIDE SEQUENCE [LARGE SCALE GENOMIC DNA]</scope>
    <source>
        <strain>05ZYH33</strain>
    </source>
</reference>
<feature type="chain" id="PRO_0000307579" description="Triosephosphate isomerase">
    <location>
        <begin position="1"/>
        <end position="250"/>
    </location>
</feature>
<feature type="active site" description="Electrophile" evidence="1">
    <location>
        <position position="96"/>
    </location>
</feature>
<feature type="active site" description="Proton acceptor" evidence="1">
    <location>
        <position position="168"/>
    </location>
</feature>
<feature type="binding site" evidence="1">
    <location>
        <begin position="10"/>
        <end position="12"/>
    </location>
    <ligand>
        <name>substrate</name>
    </ligand>
</feature>
<feature type="binding site" evidence="1">
    <location>
        <position position="174"/>
    </location>
    <ligand>
        <name>substrate</name>
    </ligand>
</feature>
<feature type="binding site" evidence="1">
    <location>
        <position position="214"/>
    </location>
    <ligand>
        <name>substrate</name>
    </ligand>
</feature>
<feature type="binding site" evidence="1">
    <location>
        <begin position="235"/>
        <end position="236"/>
    </location>
    <ligand>
        <name>substrate</name>
    </ligand>
</feature>